<accession>Q88AF9</accession>
<feature type="chain" id="PRO_0000083139" description="Biosynthetic peptidoglycan transglycosylase">
    <location>
        <begin position="1"/>
        <end position="236"/>
    </location>
</feature>
<feature type="transmembrane region" description="Helical" evidence="1">
    <location>
        <begin position="12"/>
        <end position="31"/>
    </location>
</feature>
<evidence type="ECO:0000255" key="1">
    <source>
        <dbReference type="HAMAP-Rule" id="MF_00766"/>
    </source>
</evidence>
<reference key="1">
    <citation type="journal article" date="2003" name="Proc. Natl. Acad. Sci. U.S.A.">
        <title>The complete genome sequence of the Arabidopsis and tomato pathogen Pseudomonas syringae pv. tomato DC3000.</title>
        <authorList>
            <person name="Buell C.R."/>
            <person name="Joardar V."/>
            <person name="Lindeberg M."/>
            <person name="Selengut J."/>
            <person name="Paulsen I.T."/>
            <person name="Gwinn M.L."/>
            <person name="Dodson R.J."/>
            <person name="DeBoy R.T."/>
            <person name="Durkin A.S."/>
            <person name="Kolonay J.F."/>
            <person name="Madupu R."/>
            <person name="Daugherty S.C."/>
            <person name="Brinkac L.M."/>
            <person name="Beanan M.J."/>
            <person name="Haft D.H."/>
            <person name="Nelson W.C."/>
            <person name="Davidsen T.M."/>
            <person name="Zafar N."/>
            <person name="Zhou L."/>
            <person name="Liu J."/>
            <person name="Yuan Q."/>
            <person name="Khouri H.M."/>
            <person name="Fedorova N.B."/>
            <person name="Tran B."/>
            <person name="Russell D."/>
            <person name="Berry K.J."/>
            <person name="Utterback T.R."/>
            <person name="Van Aken S.E."/>
            <person name="Feldblyum T.V."/>
            <person name="D'Ascenzo M."/>
            <person name="Deng W.-L."/>
            <person name="Ramos A.R."/>
            <person name="Alfano J.R."/>
            <person name="Cartinhour S."/>
            <person name="Chatterjee A.K."/>
            <person name="Delaney T.P."/>
            <person name="Lazarowitz S.G."/>
            <person name="Martin G.B."/>
            <person name="Schneider D.J."/>
            <person name="Tang X."/>
            <person name="Bender C.L."/>
            <person name="White O."/>
            <person name="Fraser C.M."/>
            <person name="Collmer A."/>
        </authorList>
    </citation>
    <scope>NUCLEOTIDE SEQUENCE [LARGE SCALE GENOMIC DNA]</scope>
    <source>
        <strain>ATCC BAA-871 / DC3000</strain>
    </source>
</reference>
<name>MTGA_PSESM</name>
<proteinExistence type="inferred from homology"/>
<gene>
    <name evidence="1" type="primary">mtgA</name>
    <name type="ordered locus">PSPTO_0431</name>
</gene>
<protein>
    <recommendedName>
        <fullName evidence="1">Biosynthetic peptidoglycan transglycosylase</fullName>
        <ecNumber evidence="1">2.4.99.28</ecNumber>
    </recommendedName>
    <alternativeName>
        <fullName evidence="1">Glycan polymerase</fullName>
    </alternativeName>
    <alternativeName>
        <fullName evidence="1">Peptidoglycan glycosyltransferase MtgA</fullName>
        <shortName evidence="1">PGT</shortName>
    </alternativeName>
</protein>
<keyword id="KW-0997">Cell inner membrane</keyword>
<keyword id="KW-1003">Cell membrane</keyword>
<keyword id="KW-0133">Cell shape</keyword>
<keyword id="KW-0961">Cell wall biogenesis/degradation</keyword>
<keyword id="KW-0328">Glycosyltransferase</keyword>
<keyword id="KW-0472">Membrane</keyword>
<keyword id="KW-0573">Peptidoglycan synthesis</keyword>
<keyword id="KW-1185">Reference proteome</keyword>
<keyword id="KW-0808">Transferase</keyword>
<keyword id="KW-0812">Transmembrane</keyword>
<keyword id="KW-1133">Transmembrane helix</keyword>
<dbReference type="EC" id="2.4.99.28" evidence="1"/>
<dbReference type="EMBL" id="AE016853">
    <property type="protein sequence ID" value="AAO53975.1"/>
    <property type="molecule type" value="Genomic_DNA"/>
</dbReference>
<dbReference type="RefSeq" id="NP_790280.1">
    <property type="nucleotide sequence ID" value="NC_004578.1"/>
</dbReference>
<dbReference type="RefSeq" id="WP_011103140.1">
    <property type="nucleotide sequence ID" value="NC_004578.1"/>
</dbReference>
<dbReference type="SMR" id="Q88AF9"/>
<dbReference type="STRING" id="223283.PSPTO_0431"/>
<dbReference type="CAZy" id="GT51">
    <property type="family name" value="Glycosyltransferase Family 51"/>
</dbReference>
<dbReference type="DNASU" id="1182040"/>
<dbReference type="GeneID" id="1182040"/>
<dbReference type="KEGG" id="pst:PSPTO_0431"/>
<dbReference type="PATRIC" id="fig|223283.9.peg.451"/>
<dbReference type="eggNOG" id="COG0744">
    <property type="taxonomic scope" value="Bacteria"/>
</dbReference>
<dbReference type="HOGENOM" id="CLU_006354_1_1_6"/>
<dbReference type="OrthoDB" id="9766909at2"/>
<dbReference type="PhylomeDB" id="Q88AF9"/>
<dbReference type="UniPathway" id="UPA00219"/>
<dbReference type="Proteomes" id="UP000002515">
    <property type="component" value="Chromosome"/>
</dbReference>
<dbReference type="GO" id="GO:0009274">
    <property type="term" value="C:peptidoglycan-based cell wall"/>
    <property type="evidence" value="ECO:0007669"/>
    <property type="project" value="InterPro"/>
</dbReference>
<dbReference type="GO" id="GO:0005886">
    <property type="term" value="C:plasma membrane"/>
    <property type="evidence" value="ECO:0007669"/>
    <property type="project" value="UniProtKB-SubCell"/>
</dbReference>
<dbReference type="GO" id="GO:0016763">
    <property type="term" value="F:pentosyltransferase activity"/>
    <property type="evidence" value="ECO:0007669"/>
    <property type="project" value="InterPro"/>
</dbReference>
<dbReference type="GO" id="GO:0008955">
    <property type="term" value="F:peptidoglycan glycosyltransferase activity"/>
    <property type="evidence" value="ECO:0007669"/>
    <property type="project" value="UniProtKB-UniRule"/>
</dbReference>
<dbReference type="GO" id="GO:0071555">
    <property type="term" value="P:cell wall organization"/>
    <property type="evidence" value="ECO:0007669"/>
    <property type="project" value="UniProtKB-KW"/>
</dbReference>
<dbReference type="GO" id="GO:0009252">
    <property type="term" value="P:peptidoglycan biosynthetic process"/>
    <property type="evidence" value="ECO:0007669"/>
    <property type="project" value="UniProtKB-UniRule"/>
</dbReference>
<dbReference type="GO" id="GO:0008360">
    <property type="term" value="P:regulation of cell shape"/>
    <property type="evidence" value="ECO:0007669"/>
    <property type="project" value="UniProtKB-KW"/>
</dbReference>
<dbReference type="Gene3D" id="1.10.3810.10">
    <property type="entry name" value="Biosynthetic peptidoglycan transglycosylase-like"/>
    <property type="match status" value="1"/>
</dbReference>
<dbReference type="HAMAP" id="MF_00766">
    <property type="entry name" value="PGT_MtgA"/>
    <property type="match status" value="1"/>
</dbReference>
<dbReference type="InterPro" id="IPR001264">
    <property type="entry name" value="Glyco_trans_51"/>
</dbReference>
<dbReference type="InterPro" id="IPR023346">
    <property type="entry name" value="Lysozyme-like_dom_sf"/>
</dbReference>
<dbReference type="InterPro" id="IPR036950">
    <property type="entry name" value="PBP_transglycosylase"/>
</dbReference>
<dbReference type="InterPro" id="IPR011812">
    <property type="entry name" value="Pep_trsgly"/>
</dbReference>
<dbReference type="NCBIfam" id="TIGR02070">
    <property type="entry name" value="mono_pep_trsgly"/>
    <property type="match status" value="1"/>
</dbReference>
<dbReference type="PANTHER" id="PTHR30400:SF0">
    <property type="entry name" value="BIOSYNTHETIC PEPTIDOGLYCAN TRANSGLYCOSYLASE"/>
    <property type="match status" value="1"/>
</dbReference>
<dbReference type="PANTHER" id="PTHR30400">
    <property type="entry name" value="MONOFUNCTIONAL BIOSYNTHETIC PEPTIDOGLYCAN TRANSGLYCOSYLASE"/>
    <property type="match status" value="1"/>
</dbReference>
<dbReference type="Pfam" id="PF00912">
    <property type="entry name" value="Transgly"/>
    <property type="match status" value="1"/>
</dbReference>
<dbReference type="SUPFAM" id="SSF53955">
    <property type="entry name" value="Lysozyme-like"/>
    <property type="match status" value="1"/>
</dbReference>
<comment type="function">
    <text evidence="1">Peptidoglycan polymerase that catalyzes glycan chain elongation from lipid-linked precursors.</text>
</comment>
<comment type="catalytic activity">
    <reaction evidence="1">
        <text>[GlcNAc-(1-&gt;4)-Mur2Ac(oyl-L-Ala-gamma-D-Glu-L-Lys-D-Ala-D-Ala)](n)-di-trans,octa-cis-undecaprenyl diphosphate + beta-D-GlcNAc-(1-&gt;4)-Mur2Ac(oyl-L-Ala-gamma-D-Glu-L-Lys-D-Ala-D-Ala)-di-trans,octa-cis-undecaprenyl diphosphate = [GlcNAc-(1-&gt;4)-Mur2Ac(oyl-L-Ala-gamma-D-Glu-L-Lys-D-Ala-D-Ala)](n+1)-di-trans,octa-cis-undecaprenyl diphosphate + di-trans,octa-cis-undecaprenyl diphosphate + H(+)</text>
        <dbReference type="Rhea" id="RHEA:23708"/>
        <dbReference type="Rhea" id="RHEA-COMP:9602"/>
        <dbReference type="Rhea" id="RHEA-COMP:9603"/>
        <dbReference type="ChEBI" id="CHEBI:15378"/>
        <dbReference type="ChEBI" id="CHEBI:58405"/>
        <dbReference type="ChEBI" id="CHEBI:60033"/>
        <dbReference type="ChEBI" id="CHEBI:78435"/>
        <dbReference type="EC" id="2.4.99.28"/>
    </reaction>
</comment>
<comment type="pathway">
    <text evidence="1">Cell wall biogenesis; peptidoglycan biosynthesis.</text>
</comment>
<comment type="subcellular location">
    <subcellularLocation>
        <location evidence="1">Cell inner membrane</location>
        <topology evidence="1">Single-pass membrane protein</topology>
    </subcellularLocation>
</comment>
<comment type="similarity">
    <text evidence="1">Belongs to the glycosyltransferase 51 family.</text>
</comment>
<organism>
    <name type="scientific">Pseudomonas syringae pv. tomato (strain ATCC BAA-871 / DC3000)</name>
    <dbReference type="NCBI Taxonomy" id="223283"/>
    <lineage>
        <taxon>Bacteria</taxon>
        <taxon>Pseudomonadati</taxon>
        <taxon>Pseudomonadota</taxon>
        <taxon>Gammaproteobacteria</taxon>
        <taxon>Pseudomonadales</taxon>
        <taxon>Pseudomonadaceae</taxon>
        <taxon>Pseudomonas</taxon>
    </lineage>
</organism>
<sequence>MLQIILRRLMKALLWFAAGSALVVLVLRWVPPPGTALMVERKVESWFDGEPIDLQRDWEPWDKISNNLKIAVIAGEDQKFAEHWGFDVDAIQAAILHNEQGGSIRGASTLSQQVSKNLFLWSGRSYLRKGLEAWFTMLIELLWSKERILEVYLNSVEWDEGIFGAQAAAQHHFRTNASALSEQQASYLAAVLPNPRQWSASHPSGYVSRRAGWIRQQMRQLGGDEYLQGLNSSRRW</sequence>